<accession>Q9WZM2</accession>
<protein>
    <recommendedName>
        <fullName>UPF0145 protein TM_0763</fullName>
    </recommendedName>
</protein>
<feature type="chain" id="PRO_0000138485" description="UPF0145 protein TM_0763">
    <location>
        <begin position="1"/>
        <end position="106"/>
    </location>
</feature>
<organism>
    <name type="scientific">Thermotoga maritima (strain ATCC 43589 / DSM 3109 / JCM 10099 / NBRC 100826 / MSB8)</name>
    <dbReference type="NCBI Taxonomy" id="243274"/>
    <lineage>
        <taxon>Bacteria</taxon>
        <taxon>Thermotogati</taxon>
        <taxon>Thermotogota</taxon>
        <taxon>Thermotogae</taxon>
        <taxon>Thermotogales</taxon>
        <taxon>Thermotogaceae</taxon>
        <taxon>Thermotoga</taxon>
    </lineage>
</organism>
<keyword id="KW-1185">Reference proteome</keyword>
<gene>
    <name type="ordered locus">TM_0763</name>
</gene>
<evidence type="ECO:0000305" key="1"/>
<name>Y763_THEMA</name>
<dbReference type="EMBL" id="AE000512">
    <property type="protein sequence ID" value="AAD35845.1"/>
    <property type="molecule type" value="Genomic_DNA"/>
</dbReference>
<dbReference type="PIR" id="A72336">
    <property type="entry name" value="A72336"/>
</dbReference>
<dbReference type="RefSeq" id="NP_228572.1">
    <property type="nucleotide sequence ID" value="NC_000853.1"/>
</dbReference>
<dbReference type="RefSeq" id="WP_004080935.1">
    <property type="nucleotide sequence ID" value="NC_000853.1"/>
</dbReference>
<dbReference type="SMR" id="Q9WZM2"/>
<dbReference type="STRING" id="243274.TM_0763"/>
<dbReference type="PaxDb" id="243274-THEMA_00835"/>
<dbReference type="EnsemblBacteria" id="AAD35845">
    <property type="protein sequence ID" value="AAD35845"/>
    <property type="gene ID" value="TM_0763"/>
</dbReference>
<dbReference type="KEGG" id="tma:TM0763"/>
<dbReference type="KEGG" id="tmi:THEMA_00835"/>
<dbReference type="KEGG" id="tmm:Tmari_0764"/>
<dbReference type="KEGG" id="tmw:THMA_0782"/>
<dbReference type="eggNOG" id="COG0393">
    <property type="taxonomic scope" value="Bacteria"/>
</dbReference>
<dbReference type="InParanoid" id="Q9WZM2"/>
<dbReference type="OrthoDB" id="9796448at2"/>
<dbReference type="Proteomes" id="UP000008183">
    <property type="component" value="Chromosome"/>
</dbReference>
<dbReference type="Gene3D" id="3.30.110.70">
    <property type="entry name" value="Hypothetical protein apc22750. Chain B"/>
    <property type="match status" value="1"/>
</dbReference>
<dbReference type="HAMAP" id="MF_00338">
    <property type="entry name" value="UPF0145"/>
    <property type="match status" value="1"/>
</dbReference>
<dbReference type="InterPro" id="IPR035439">
    <property type="entry name" value="UPF0145_dom_sf"/>
</dbReference>
<dbReference type="InterPro" id="IPR002765">
    <property type="entry name" value="UPF0145_YbjQ-like"/>
</dbReference>
<dbReference type="PANTHER" id="PTHR34068:SF2">
    <property type="entry name" value="UPF0145 PROTEIN SCO3412"/>
    <property type="match status" value="1"/>
</dbReference>
<dbReference type="PANTHER" id="PTHR34068">
    <property type="entry name" value="UPF0145 PROTEIN YBJQ"/>
    <property type="match status" value="1"/>
</dbReference>
<dbReference type="Pfam" id="PF01906">
    <property type="entry name" value="YbjQ_1"/>
    <property type="match status" value="1"/>
</dbReference>
<dbReference type="SUPFAM" id="SSF117782">
    <property type="entry name" value="YbjQ-like"/>
    <property type="match status" value="1"/>
</dbReference>
<reference key="1">
    <citation type="journal article" date="1999" name="Nature">
        <title>Evidence for lateral gene transfer between Archaea and Bacteria from genome sequence of Thermotoga maritima.</title>
        <authorList>
            <person name="Nelson K.E."/>
            <person name="Clayton R.A."/>
            <person name="Gill S.R."/>
            <person name="Gwinn M.L."/>
            <person name="Dodson R.J."/>
            <person name="Haft D.H."/>
            <person name="Hickey E.K."/>
            <person name="Peterson J.D."/>
            <person name="Nelson W.C."/>
            <person name="Ketchum K.A."/>
            <person name="McDonald L.A."/>
            <person name="Utterback T.R."/>
            <person name="Malek J.A."/>
            <person name="Linher K.D."/>
            <person name="Garrett M.M."/>
            <person name="Stewart A.M."/>
            <person name="Cotton M.D."/>
            <person name="Pratt M.S."/>
            <person name="Phillips C.A."/>
            <person name="Richardson D.L."/>
            <person name="Heidelberg J.F."/>
            <person name="Sutton G.G."/>
            <person name="Fleischmann R.D."/>
            <person name="Eisen J.A."/>
            <person name="White O."/>
            <person name="Salzberg S.L."/>
            <person name="Smith H.O."/>
            <person name="Venter J.C."/>
            <person name="Fraser C.M."/>
        </authorList>
    </citation>
    <scope>NUCLEOTIDE SEQUENCE [LARGE SCALE GENOMIC DNA]</scope>
    <source>
        <strain>ATCC 43589 / DSM 3109 / JCM 10099 / NBRC 100826 / MSB8</strain>
    </source>
</reference>
<sequence>MIITTTEQVPGYRVKEILGVVSGNVVMSKHLGRDIAAAFKTLAGGEIKGYTEMLTEARNIALERMMKEAEKLGADAVIGFRYSSSTIMSGAAEILAYGTAVKLEKI</sequence>
<proteinExistence type="inferred from homology"/>
<comment type="similarity">
    <text evidence="1">Belongs to the UPF0145 family.</text>
</comment>